<accession>P20213</accession>
<protein>
    <recommendedName>
        <fullName>Uncharacterized protein D-244</fullName>
    </recommendedName>
</protein>
<dbReference type="EMBL" id="X07234">
    <property type="protein sequence ID" value="CAA30214.1"/>
    <property type="molecule type" value="Genomic_DNA"/>
</dbReference>
<dbReference type="PIR" id="S03215">
    <property type="entry name" value="S03215"/>
</dbReference>
<dbReference type="RefSeq" id="NP_039781.1">
    <property type="nucleotide sequence ID" value="NC_001338.1"/>
</dbReference>
<dbReference type="SMR" id="P20213"/>
<dbReference type="KEGG" id="vg:2559648"/>
<dbReference type="OrthoDB" id="9356at10239"/>
<dbReference type="Proteomes" id="UP000000854">
    <property type="component" value="Genome"/>
</dbReference>
<dbReference type="Gene3D" id="3.40.1350.50">
    <property type="entry name" value="D212 PD-(D/E)XK nuclease, catalytic motif"/>
    <property type="match status" value="1"/>
</dbReference>
<dbReference type="InterPro" id="IPR022012">
    <property type="entry name" value="D212_cat_dom"/>
</dbReference>
<dbReference type="InterPro" id="IPR043115">
    <property type="entry name" value="D212_cat_dom_sf"/>
</dbReference>
<dbReference type="Pfam" id="PF12187">
    <property type="entry name" value="VirArc_Nuclease"/>
    <property type="match status" value="1"/>
</dbReference>
<feature type="chain" id="PRO_0000223025" description="Uncharacterized protein D-244">
    <location>
        <begin position="1"/>
        <end position="244"/>
    </location>
</feature>
<name>D244_SSV1</name>
<organism>
    <name type="scientific">Sulfolobus spindle-shape virus 1</name>
    <name type="common">SSV1</name>
    <dbReference type="NCBI Taxonomy" id="244589"/>
    <lineage>
        <taxon>Viruses</taxon>
        <taxon>Viruses incertae sedis</taxon>
        <taxon>Fuselloviridae</taxon>
        <taxon>Alphafusellovirus</taxon>
    </lineage>
</organism>
<sequence>MDCNRNCYCKCVICNSISTDSHTSPRFNMVSEMAETNFKLKYWGNQAEDYILPSTYLGREYLVFGKLLISLSKWRAKGLLDFDVYIRPTGVGTLTNVINEQYYSGLQDKYDLTLYVKAKTEYYPLIWIDITGSSWTEEQSKERYGESVYAILSTKVEVAKQNEVMGRVWFIHYSDAEDKLKCISALQILNLEKQGKIKKDKFERDAVSYYYLIPLQYWKNLTDLRVSLKGFYQSFKEYLARGGK</sequence>
<keyword id="KW-1185">Reference proteome</keyword>
<gene>
    <name type="ORF">d244</name>
</gene>
<organismHost>
    <name type="scientific">Saccharolobus solfataricus</name>
    <name type="common">Sulfolobus solfataricus</name>
    <dbReference type="NCBI Taxonomy" id="2287"/>
</organismHost>
<proteinExistence type="predicted"/>
<reference key="1">
    <citation type="journal article" date="1991" name="Virology">
        <title>Complete nucleotide sequence of the virus SSV1 of the archaebacterium Sulfolobus shibatae.</title>
        <authorList>
            <person name="Palm P."/>
            <person name="Schleper C."/>
            <person name="Grampp B."/>
            <person name="Yeats S."/>
            <person name="McWilliam P."/>
            <person name="Reiter W.-D."/>
            <person name="Zillig W."/>
        </authorList>
    </citation>
    <scope>NUCLEOTIDE SEQUENCE [GENOMIC DNA]</scope>
</reference>